<name>Y1863_LISIN</name>
<feature type="chain" id="PRO_0000161998" description="Uncharacterized RNA methyltransferase lin1863">
    <location>
        <begin position="1"/>
        <end position="453"/>
    </location>
</feature>
<feature type="domain" description="TRAM" evidence="2">
    <location>
        <begin position="5"/>
        <end position="63"/>
    </location>
</feature>
<feature type="active site" description="Nucleophile" evidence="3">
    <location>
        <position position="410"/>
    </location>
</feature>
<feature type="binding site" evidence="1">
    <location>
        <position position="76"/>
    </location>
    <ligand>
        <name>[4Fe-4S] cluster</name>
        <dbReference type="ChEBI" id="CHEBI:49883"/>
    </ligand>
</feature>
<feature type="binding site" evidence="1">
    <location>
        <position position="82"/>
    </location>
    <ligand>
        <name>[4Fe-4S] cluster</name>
        <dbReference type="ChEBI" id="CHEBI:49883"/>
    </ligand>
</feature>
<feature type="binding site" evidence="1">
    <location>
        <position position="85"/>
    </location>
    <ligand>
        <name>[4Fe-4S] cluster</name>
        <dbReference type="ChEBI" id="CHEBI:49883"/>
    </ligand>
</feature>
<feature type="binding site" evidence="1">
    <location>
        <position position="162"/>
    </location>
    <ligand>
        <name>[4Fe-4S] cluster</name>
        <dbReference type="ChEBI" id="CHEBI:49883"/>
    </ligand>
</feature>
<feature type="binding site" evidence="3">
    <location>
        <position position="285"/>
    </location>
    <ligand>
        <name>S-adenosyl-L-methionine</name>
        <dbReference type="ChEBI" id="CHEBI:59789"/>
    </ligand>
</feature>
<feature type="binding site" evidence="3">
    <location>
        <position position="314"/>
    </location>
    <ligand>
        <name>S-adenosyl-L-methionine</name>
        <dbReference type="ChEBI" id="CHEBI:59789"/>
    </ligand>
</feature>
<feature type="binding site" evidence="3">
    <location>
        <position position="335"/>
    </location>
    <ligand>
        <name>S-adenosyl-L-methionine</name>
        <dbReference type="ChEBI" id="CHEBI:59789"/>
    </ligand>
</feature>
<feature type="binding site" evidence="3">
    <location>
        <position position="383"/>
    </location>
    <ligand>
        <name>S-adenosyl-L-methionine</name>
        <dbReference type="ChEBI" id="CHEBI:59789"/>
    </ligand>
</feature>
<dbReference type="EC" id="2.1.1.-"/>
<dbReference type="EMBL" id="AL596170">
    <property type="protein sequence ID" value="CAC97093.1"/>
    <property type="molecule type" value="Genomic_DNA"/>
</dbReference>
<dbReference type="PIR" id="AE1665">
    <property type="entry name" value="AE1665"/>
</dbReference>
<dbReference type="RefSeq" id="WP_003762819.1">
    <property type="nucleotide sequence ID" value="NC_003212.1"/>
</dbReference>
<dbReference type="SMR" id="Q92AQ7"/>
<dbReference type="STRING" id="272626.gene:17566218"/>
<dbReference type="GeneID" id="93235198"/>
<dbReference type="KEGG" id="lin:lin1863"/>
<dbReference type="eggNOG" id="COG2265">
    <property type="taxonomic scope" value="Bacteria"/>
</dbReference>
<dbReference type="HOGENOM" id="CLU_014689_7_1_9"/>
<dbReference type="OrthoDB" id="9804590at2"/>
<dbReference type="Proteomes" id="UP000002513">
    <property type="component" value="Chromosome"/>
</dbReference>
<dbReference type="GO" id="GO:0051539">
    <property type="term" value="F:4 iron, 4 sulfur cluster binding"/>
    <property type="evidence" value="ECO:0007669"/>
    <property type="project" value="UniProtKB-KW"/>
</dbReference>
<dbReference type="GO" id="GO:0046872">
    <property type="term" value="F:metal ion binding"/>
    <property type="evidence" value="ECO:0007669"/>
    <property type="project" value="UniProtKB-KW"/>
</dbReference>
<dbReference type="GO" id="GO:0070041">
    <property type="term" value="F:rRNA (uridine-C5-)-methyltransferase activity"/>
    <property type="evidence" value="ECO:0007669"/>
    <property type="project" value="TreeGrafter"/>
</dbReference>
<dbReference type="GO" id="GO:0070475">
    <property type="term" value="P:rRNA base methylation"/>
    <property type="evidence" value="ECO:0007669"/>
    <property type="project" value="TreeGrafter"/>
</dbReference>
<dbReference type="CDD" id="cd02440">
    <property type="entry name" value="AdoMet_MTases"/>
    <property type="match status" value="1"/>
</dbReference>
<dbReference type="FunFam" id="3.40.50.150:FF:000009">
    <property type="entry name" value="23S rRNA (Uracil(1939)-C(5))-methyltransferase RlmD"/>
    <property type="match status" value="1"/>
</dbReference>
<dbReference type="FunFam" id="2.40.50.140:FF:000097">
    <property type="entry name" value="23S rRNA (uracil(1939)-C(5))-methyltransferase RlmD"/>
    <property type="match status" value="1"/>
</dbReference>
<dbReference type="FunFam" id="2.40.50.1070:FF:000003">
    <property type="entry name" value="23S rRNA (Uracil-5-)-methyltransferase RumA"/>
    <property type="match status" value="1"/>
</dbReference>
<dbReference type="Gene3D" id="2.40.50.1070">
    <property type="match status" value="1"/>
</dbReference>
<dbReference type="Gene3D" id="2.40.50.140">
    <property type="entry name" value="Nucleic acid-binding proteins"/>
    <property type="match status" value="1"/>
</dbReference>
<dbReference type="Gene3D" id="3.40.50.150">
    <property type="entry name" value="Vaccinia Virus protein VP39"/>
    <property type="match status" value="1"/>
</dbReference>
<dbReference type="InterPro" id="IPR030390">
    <property type="entry name" value="MeTrfase_TrmA_AS"/>
</dbReference>
<dbReference type="InterPro" id="IPR030391">
    <property type="entry name" value="MeTrfase_TrmA_CS"/>
</dbReference>
<dbReference type="InterPro" id="IPR012340">
    <property type="entry name" value="NA-bd_OB-fold"/>
</dbReference>
<dbReference type="InterPro" id="IPR029063">
    <property type="entry name" value="SAM-dependent_MTases_sf"/>
</dbReference>
<dbReference type="InterPro" id="IPR002792">
    <property type="entry name" value="TRAM_dom"/>
</dbReference>
<dbReference type="InterPro" id="IPR010280">
    <property type="entry name" value="U5_MeTrfase_fam"/>
</dbReference>
<dbReference type="NCBIfam" id="TIGR00479">
    <property type="entry name" value="rumA"/>
    <property type="match status" value="1"/>
</dbReference>
<dbReference type="PANTHER" id="PTHR11061">
    <property type="entry name" value="RNA M5U METHYLTRANSFERASE"/>
    <property type="match status" value="1"/>
</dbReference>
<dbReference type="PANTHER" id="PTHR11061:SF30">
    <property type="entry name" value="TRNA (URACIL(54)-C(5))-METHYLTRANSFERASE"/>
    <property type="match status" value="1"/>
</dbReference>
<dbReference type="Pfam" id="PF01938">
    <property type="entry name" value="TRAM"/>
    <property type="match status" value="1"/>
</dbReference>
<dbReference type="Pfam" id="PF05958">
    <property type="entry name" value="tRNA_U5-meth_tr"/>
    <property type="match status" value="1"/>
</dbReference>
<dbReference type="SUPFAM" id="SSF50249">
    <property type="entry name" value="Nucleic acid-binding proteins"/>
    <property type="match status" value="1"/>
</dbReference>
<dbReference type="SUPFAM" id="SSF53335">
    <property type="entry name" value="S-adenosyl-L-methionine-dependent methyltransferases"/>
    <property type="match status" value="1"/>
</dbReference>
<dbReference type="PROSITE" id="PS51687">
    <property type="entry name" value="SAM_MT_RNA_M5U"/>
    <property type="match status" value="1"/>
</dbReference>
<dbReference type="PROSITE" id="PS50926">
    <property type="entry name" value="TRAM"/>
    <property type="match status" value="1"/>
</dbReference>
<dbReference type="PROSITE" id="PS01230">
    <property type="entry name" value="TRMA_1"/>
    <property type="match status" value="1"/>
</dbReference>
<dbReference type="PROSITE" id="PS01231">
    <property type="entry name" value="TRMA_2"/>
    <property type="match status" value="1"/>
</dbReference>
<sequence>MEASLLKKNQSVELTIEDLTHDGSGVGKIDGYPLFIPNALPGEKITAKITKLNKNYGFARMENIEVVSAERVEPPCAVYSKCGGCSLQHLSYDGQLAFKRNQVEETMKRIGKLNVEVPDTLGMENPWRYRNKSQVPVGFVNGKLTAGFYQKRSHDIIDMSTCLIHNEKGDVAVQKTREILAKYGTEPYDEKTGKGDIRHIMTRFAHTTGQLMIVLVTTKERLPFKAEIIQDLTNQLEVTSIVQNINPQKTNVIFGDRTKTLWGSDIIEDTIHGIRFAISARSFYQVNPLQTEVLYQQAIDSAELTGEETVIDAYCGIGSISLCLAKKAKHVYGVEIVDQAIQDARANAELNNLTNTTFETGKAEEVIPQWYKNGIVADVLVVDPPRKGCDETLLETILAMKPKKVVYVSCNPGTLARDMKILTEGGYEAKKVQPVDMFPMTTHIEAVTVLTLK</sequence>
<organism>
    <name type="scientific">Listeria innocua serovar 6a (strain ATCC BAA-680 / CLIP 11262)</name>
    <dbReference type="NCBI Taxonomy" id="272626"/>
    <lineage>
        <taxon>Bacteria</taxon>
        <taxon>Bacillati</taxon>
        <taxon>Bacillota</taxon>
        <taxon>Bacilli</taxon>
        <taxon>Bacillales</taxon>
        <taxon>Listeriaceae</taxon>
        <taxon>Listeria</taxon>
    </lineage>
</organism>
<evidence type="ECO:0000250" key="1"/>
<evidence type="ECO:0000255" key="2">
    <source>
        <dbReference type="PROSITE-ProRule" id="PRU00208"/>
    </source>
</evidence>
<evidence type="ECO:0000255" key="3">
    <source>
        <dbReference type="PROSITE-ProRule" id="PRU01024"/>
    </source>
</evidence>
<comment type="similarity">
    <text evidence="3">Belongs to the class I-like SAM-binding methyltransferase superfamily. RNA M5U methyltransferase family.</text>
</comment>
<accession>Q92AQ7</accession>
<keyword id="KW-0004">4Fe-4S</keyword>
<keyword id="KW-0408">Iron</keyword>
<keyword id="KW-0411">Iron-sulfur</keyword>
<keyword id="KW-0479">Metal-binding</keyword>
<keyword id="KW-0489">Methyltransferase</keyword>
<keyword id="KW-0949">S-adenosyl-L-methionine</keyword>
<keyword id="KW-0808">Transferase</keyword>
<protein>
    <recommendedName>
        <fullName>Uncharacterized RNA methyltransferase lin1863</fullName>
        <ecNumber>2.1.1.-</ecNumber>
    </recommendedName>
</protein>
<reference key="1">
    <citation type="journal article" date="2001" name="Science">
        <title>Comparative genomics of Listeria species.</title>
        <authorList>
            <person name="Glaser P."/>
            <person name="Frangeul L."/>
            <person name="Buchrieser C."/>
            <person name="Rusniok C."/>
            <person name="Amend A."/>
            <person name="Baquero F."/>
            <person name="Berche P."/>
            <person name="Bloecker H."/>
            <person name="Brandt P."/>
            <person name="Chakraborty T."/>
            <person name="Charbit A."/>
            <person name="Chetouani F."/>
            <person name="Couve E."/>
            <person name="de Daruvar A."/>
            <person name="Dehoux P."/>
            <person name="Domann E."/>
            <person name="Dominguez-Bernal G."/>
            <person name="Duchaud E."/>
            <person name="Durant L."/>
            <person name="Dussurget O."/>
            <person name="Entian K.-D."/>
            <person name="Fsihi H."/>
            <person name="Garcia-del Portillo F."/>
            <person name="Garrido P."/>
            <person name="Gautier L."/>
            <person name="Goebel W."/>
            <person name="Gomez-Lopez N."/>
            <person name="Hain T."/>
            <person name="Hauf J."/>
            <person name="Jackson D."/>
            <person name="Jones L.-M."/>
            <person name="Kaerst U."/>
            <person name="Kreft J."/>
            <person name="Kuhn M."/>
            <person name="Kunst F."/>
            <person name="Kurapkat G."/>
            <person name="Madueno E."/>
            <person name="Maitournam A."/>
            <person name="Mata Vicente J."/>
            <person name="Ng E."/>
            <person name="Nedjari H."/>
            <person name="Nordsiek G."/>
            <person name="Novella S."/>
            <person name="de Pablos B."/>
            <person name="Perez-Diaz J.-C."/>
            <person name="Purcell R."/>
            <person name="Remmel B."/>
            <person name="Rose M."/>
            <person name="Schlueter T."/>
            <person name="Simoes N."/>
            <person name="Tierrez A."/>
            <person name="Vazquez-Boland J.-A."/>
            <person name="Voss H."/>
            <person name="Wehland J."/>
            <person name="Cossart P."/>
        </authorList>
    </citation>
    <scope>NUCLEOTIDE SEQUENCE [LARGE SCALE GENOMIC DNA]</scope>
    <source>
        <strain>ATCC BAA-680 / CLIP 11262</strain>
    </source>
</reference>
<gene>
    <name type="ordered locus">lin1863</name>
</gene>
<proteinExistence type="inferred from homology"/>